<name>ABH2A_DANRE</name>
<dbReference type="EC" id="3.1.1.23" evidence="1"/>
<dbReference type="EC" id="3.1.1.6"/>
<dbReference type="EC" id="3.1.1.79"/>
<dbReference type="EMBL" id="BC047183">
    <property type="protein sequence ID" value="AAH47183.1"/>
    <property type="molecule type" value="mRNA"/>
</dbReference>
<dbReference type="RefSeq" id="NP_957208.1">
    <property type="nucleotide sequence ID" value="NM_200914.1"/>
</dbReference>
<dbReference type="FunCoup" id="Q802V6">
    <property type="interactions" value="436"/>
</dbReference>
<dbReference type="STRING" id="7955.ENSDARP00000035450"/>
<dbReference type="ESTHER" id="danre-Q802V6">
    <property type="family name" value="abh_upf0017"/>
</dbReference>
<dbReference type="GlyCosmos" id="Q802V6">
    <property type="glycosylation" value="3 sites, No reported glycans"/>
</dbReference>
<dbReference type="PaxDb" id="7955-ENSDARP00000035450"/>
<dbReference type="Ensembl" id="ENSDART00000035067">
    <property type="protein sequence ID" value="ENSDARP00000035450"/>
    <property type="gene ID" value="ENSDARG00000025797"/>
</dbReference>
<dbReference type="Ensembl" id="ENSDART00000191360">
    <property type="protein sequence ID" value="ENSDARP00000155700"/>
    <property type="gene ID" value="ENSDARG00000025797"/>
</dbReference>
<dbReference type="GeneID" id="393888"/>
<dbReference type="KEGG" id="dre:393888"/>
<dbReference type="AGR" id="ZFIN:ZDB-GENE-040426-784"/>
<dbReference type="CTD" id="393888"/>
<dbReference type="ZFIN" id="ZDB-GENE-040426-784">
    <property type="gene designation" value="abhd2a"/>
</dbReference>
<dbReference type="eggNOG" id="KOG1838">
    <property type="taxonomic scope" value="Eukaryota"/>
</dbReference>
<dbReference type="HOGENOM" id="CLU_032487_5_0_1"/>
<dbReference type="InParanoid" id="Q802V6"/>
<dbReference type="OMA" id="HCTGEDV"/>
<dbReference type="OrthoDB" id="5954035at2759"/>
<dbReference type="PhylomeDB" id="Q802V6"/>
<dbReference type="TreeFam" id="TF313195"/>
<dbReference type="PRO" id="PR:Q802V6"/>
<dbReference type="Proteomes" id="UP000000437">
    <property type="component" value="Chromosome 7"/>
</dbReference>
<dbReference type="Bgee" id="ENSDARG00000025797">
    <property type="expression patterns" value="Expressed in caudal fin and 24 other cell types or tissues"/>
</dbReference>
<dbReference type="GO" id="GO:0036126">
    <property type="term" value="C:sperm flagellum"/>
    <property type="evidence" value="ECO:0000318"/>
    <property type="project" value="GO_Central"/>
</dbReference>
<dbReference type="GO" id="GO:0097524">
    <property type="term" value="C:sperm plasma membrane"/>
    <property type="evidence" value="ECO:0000318"/>
    <property type="project" value="GO_Central"/>
</dbReference>
<dbReference type="GO" id="GO:0008126">
    <property type="term" value="F:acetylesterase activity"/>
    <property type="evidence" value="ECO:0000250"/>
    <property type="project" value="UniProtKB"/>
</dbReference>
<dbReference type="GO" id="GO:0120516">
    <property type="term" value="F:diacylglycerol lipase activity"/>
    <property type="evidence" value="ECO:0000250"/>
    <property type="project" value="UniProtKB"/>
</dbReference>
<dbReference type="GO" id="GO:0042562">
    <property type="term" value="F:hormone binding"/>
    <property type="evidence" value="ECO:0000250"/>
    <property type="project" value="UniProtKB"/>
</dbReference>
<dbReference type="GO" id="GO:0047372">
    <property type="term" value="F:monoacylglycerol lipase activity"/>
    <property type="evidence" value="ECO:0000250"/>
    <property type="project" value="UniProtKB"/>
</dbReference>
<dbReference type="GO" id="GO:0003707">
    <property type="term" value="F:nuclear steroid receptor activity"/>
    <property type="evidence" value="ECO:0000250"/>
    <property type="project" value="UniProtKB"/>
</dbReference>
<dbReference type="GO" id="GO:0004806">
    <property type="term" value="F:triacylglycerol lipase activity"/>
    <property type="evidence" value="ECO:0007669"/>
    <property type="project" value="RHEA"/>
</dbReference>
<dbReference type="GO" id="GO:0046464">
    <property type="term" value="P:acylglycerol catabolic process"/>
    <property type="evidence" value="ECO:0000250"/>
    <property type="project" value="UniProtKB"/>
</dbReference>
<dbReference type="GO" id="GO:0051792">
    <property type="term" value="P:medium-chain fatty acid biosynthetic process"/>
    <property type="evidence" value="ECO:0000318"/>
    <property type="project" value="GO_Central"/>
</dbReference>
<dbReference type="GO" id="GO:0051793">
    <property type="term" value="P:medium-chain fatty acid catabolic process"/>
    <property type="evidence" value="ECO:0000318"/>
    <property type="project" value="GO_Central"/>
</dbReference>
<dbReference type="GO" id="GO:0032570">
    <property type="term" value="P:response to progesterone"/>
    <property type="evidence" value="ECO:0000250"/>
    <property type="project" value="UniProtKB"/>
</dbReference>
<dbReference type="GO" id="GO:0048240">
    <property type="term" value="P:sperm capacitation"/>
    <property type="evidence" value="ECO:0000318"/>
    <property type="project" value="GO_Central"/>
</dbReference>
<dbReference type="GO" id="GO:0043401">
    <property type="term" value="P:steroid hormone receptor signaling pathway"/>
    <property type="evidence" value="ECO:0000250"/>
    <property type="project" value="UniProtKB"/>
</dbReference>
<dbReference type="FunFam" id="3.40.50.1820:FF:000053">
    <property type="entry name" value="Abhydrolase domain containing 2"/>
    <property type="match status" value="1"/>
</dbReference>
<dbReference type="Gene3D" id="3.40.50.1820">
    <property type="entry name" value="alpha/beta hydrolase"/>
    <property type="match status" value="1"/>
</dbReference>
<dbReference type="InterPro" id="IPR000073">
    <property type="entry name" value="AB_hydrolase_1"/>
</dbReference>
<dbReference type="InterPro" id="IPR050960">
    <property type="entry name" value="AB_hydrolase_4_sf"/>
</dbReference>
<dbReference type="InterPro" id="IPR029058">
    <property type="entry name" value="AB_hydrolase_fold"/>
</dbReference>
<dbReference type="InterPro" id="IPR012020">
    <property type="entry name" value="ABHD4"/>
</dbReference>
<dbReference type="PANTHER" id="PTHR10794">
    <property type="entry name" value="ABHYDROLASE DOMAIN-CONTAINING PROTEIN"/>
    <property type="match status" value="1"/>
</dbReference>
<dbReference type="PANTHER" id="PTHR10794:SF80">
    <property type="entry name" value="MONOACYLGLYCEROL LIPASE ABHD2"/>
    <property type="match status" value="1"/>
</dbReference>
<dbReference type="Pfam" id="PF00561">
    <property type="entry name" value="Abhydrolase_1"/>
    <property type="match status" value="1"/>
</dbReference>
<dbReference type="PIRSF" id="PIRSF005211">
    <property type="entry name" value="Ab_hydro_YheT"/>
    <property type="match status" value="1"/>
</dbReference>
<dbReference type="SUPFAM" id="SSF53474">
    <property type="entry name" value="alpha/beta-Hydrolases"/>
    <property type="match status" value="1"/>
</dbReference>
<gene>
    <name type="primary">abhd2a</name>
    <name type="synonym">abhd2</name>
    <name evidence="7" type="ORF">zgc:55722</name>
</gene>
<accession>Q802V6</accession>
<proteinExistence type="evidence at transcript level"/>
<keyword id="KW-1003">Cell membrane</keyword>
<keyword id="KW-0325">Glycoprotein</keyword>
<keyword id="KW-0378">Hydrolase</keyword>
<keyword id="KW-0442">Lipid degradation</keyword>
<keyword id="KW-0443">Lipid metabolism</keyword>
<keyword id="KW-0472">Membrane</keyword>
<keyword id="KW-1185">Reference proteome</keyword>
<keyword id="KW-0719">Serine esterase</keyword>
<keyword id="KW-0735">Signal-anchor</keyword>
<keyword id="KW-0812">Transmembrane</keyword>
<keyword id="KW-1133">Transmembrane helix</keyword>
<organism>
    <name type="scientific">Danio rerio</name>
    <name type="common">Zebrafish</name>
    <name type="synonym">Brachydanio rerio</name>
    <dbReference type="NCBI Taxonomy" id="7955"/>
    <lineage>
        <taxon>Eukaryota</taxon>
        <taxon>Metazoa</taxon>
        <taxon>Chordata</taxon>
        <taxon>Craniata</taxon>
        <taxon>Vertebrata</taxon>
        <taxon>Euteleostomi</taxon>
        <taxon>Actinopterygii</taxon>
        <taxon>Neopterygii</taxon>
        <taxon>Teleostei</taxon>
        <taxon>Ostariophysi</taxon>
        <taxon>Cypriniformes</taxon>
        <taxon>Danionidae</taxon>
        <taxon>Danioninae</taxon>
        <taxon>Danio</taxon>
    </lineage>
</organism>
<reference key="1">
    <citation type="submission" date="2003-02" db="EMBL/GenBank/DDBJ databases">
        <authorList>
            <consortium name="NIH - Zebrafish Gene Collection (ZGC) project"/>
        </authorList>
    </citation>
    <scope>NUCLEOTIDE SEQUENCE [LARGE SCALE MRNA]</scope>
    <source>
        <strain>AB</strain>
    </source>
</reference>
<protein>
    <recommendedName>
        <fullName evidence="1">Monoacylglycerol lipase ABHD2</fullName>
        <ecNumber evidence="1">3.1.1.23</ecNumber>
    </recommendedName>
    <alternativeName>
        <fullName evidence="8">2-arachidonoylglycerol hydrolase</fullName>
    </alternativeName>
    <alternativeName>
        <fullName evidence="8">Abhydrolase domain-containing protein 2-A</fullName>
    </alternativeName>
    <alternativeName>
        <fullName>Acetylesterase</fullName>
        <ecNumber>3.1.1.6</ecNumber>
    </alternativeName>
    <alternativeName>
        <fullName>Triacylglycerol lipase</fullName>
        <ecNumber>3.1.1.79</ecNumber>
    </alternativeName>
</protein>
<sequence>MNTHESEVYTVAPEMPAMFDGMKLAAVATVLYVIVRCLNLKSPTAPPDLTFQDTTLNHFLLKSCPILTKEYIPPLLWGKSGHLQTALYGKLGRVSSPHPFGLRKYLPMQDGATATFDLFEPLADHQSGEDVTMVICPGIGNHSEKHYIRTFVDHSQKQGYRCAVLNHLGALPNIELTSPRMFTYGCTWEFAAMVGFIKKTYPQSKLIVVGFSLGGNIVCKFLGENRTNQERVLCCVSVCQGYSALRAQETFLQWDQCRRFYNFLMADNMKKIILSHRGVLFGVGSKMVDSELSRLYTATSLMQIDDNIMRKFHGHNSLKEYYEKESCVHYIHNINVPLLLVNSVDDPLVHNSLLTIPRTLAEKKENVVFALTLHGGHLGFFEGAVLFPQPLTWMDKVIVDYATAMCQWEKQKPPCQSKDAQSNQTTCQENTS</sequence>
<comment type="function">
    <text evidence="1 3">Progesterone-dependent acylglycerol lipase that catalyzes hydrolysis of endocannabinoid arachidonoylglycerol (AG) from cell membrane. Acts as a progesterone receptor: progesterone-binding activates the acylglycerol lipase activity, mediating degradation of 1-arachidonoylglycerol (1AG) and 2-arachidonoylglycerol (2AG) to glycerol and arachidonic acid (AA). Also displays an ester hydrolase activity against acetyl ester, butanoate ester and hexadecanoate ester. Plays a key role in sperm capacitation in response to progesterone by mediating degradation of 2AG, an inhibitor of the sperm calcium channel CatSper, leading to calcium influx via CatSper and sperm activation (By similarity). May also play a role in smooth muscle cells migration (By similarity).</text>
</comment>
<comment type="catalytic activity">
    <reaction evidence="1">
        <text>Hydrolyzes glycerol monoesters of long-chain fatty acids.</text>
        <dbReference type="EC" id="3.1.1.23"/>
    </reaction>
</comment>
<comment type="catalytic activity">
    <reaction evidence="1">
        <text>an acetyl ester + H2O = an aliphatic alcohol + acetate + H(+)</text>
        <dbReference type="Rhea" id="RHEA:12957"/>
        <dbReference type="ChEBI" id="CHEBI:2571"/>
        <dbReference type="ChEBI" id="CHEBI:15377"/>
        <dbReference type="ChEBI" id="CHEBI:15378"/>
        <dbReference type="ChEBI" id="CHEBI:30089"/>
        <dbReference type="ChEBI" id="CHEBI:47622"/>
        <dbReference type="EC" id="3.1.1.6"/>
    </reaction>
    <physiologicalReaction direction="left-to-right" evidence="1">
        <dbReference type="Rhea" id="RHEA:12958"/>
    </physiologicalReaction>
</comment>
<comment type="catalytic activity">
    <reaction evidence="1">
        <text>a triacylglycerol + H2O = a diacylglycerol + a fatty acid + H(+)</text>
        <dbReference type="Rhea" id="RHEA:12044"/>
        <dbReference type="ChEBI" id="CHEBI:15377"/>
        <dbReference type="ChEBI" id="CHEBI:15378"/>
        <dbReference type="ChEBI" id="CHEBI:17855"/>
        <dbReference type="ChEBI" id="CHEBI:18035"/>
        <dbReference type="ChEBI" id="CHEBI:28868"/>
        <dbReference type="EC" id="3.1.1.79"/>
    </reaction>
    <physiologicalReaction direction="left-to-right" evidence="1">
        <dbReference type="Rhea" id="RHEA:12045"/>
    </physiologicalReaction>
</comment>
<comment type="catalytic activity">
    <reaction evidence="1">
        <text>2-(5Z,8Z,11Z,14Z-eicosatetraenoyl)-glycerol + H2O = glycerol + (5Z,8Z,11Z,14Z)-eicosatetraenoate + H(+)</text>
        <dbReference type="Rhea" id="RHEA:26132"/>
        <dbReference type="ChEBI" id="CHEBI:15377"/>
        <dbReference type="ChEBI" id="CHEBI:15378"/>
        <dbReference type="ChEBI" id="CHEBI:17754"/>
        <dbReference type="ChEBI" id="CHEBI:32395"/>
        <dbReference type="ChEBI" id="CHEBI:52392"/>
    </reaction>
    <physiologicalReaction direction="left-to-right" evidence="1">
        <dbReference type="Rhea" id="RHEA:26133"/>
    </physiologicalReaction>
</comment>
<comment type="catalytic activity">
    <reaction evidence="1">
        <text>a butanoate ester + H2O = an aliphatic alcohol + butanoate + H(+)</text>
        <dbReference type="Rhea" id="RHEA:47348"/>
        <dbReference type="ChEBI" id="CHEBI:2571"/>
        <dbReference type="ChEBI" id="CHEBI:15377"/>
        <dbReference type="ChEBI" id="CHEBI:15378"/>
        <dbReference type="ChEBI" id="CHEBI:17968"/>
        <dbReference type="ChEBI" id="CHEBI:50477"/>
    </reaction>
    <physiologicalReaction direction="left-to-right" evidence="1">
        <dbReference type="Rhea" id="RHEA:47349"/>
    </physiologicalReaction>
</comment>
<comment type="catalytic activity">
    <reaction evidence="1">
        <text>hexadecanoate ester + H2O = an aliphatic alcohol + hexadecanoate + H(+)</text>
        <dbReference type="Rhea" id="RHEA:47392"/>
        <dbReference type="ChEBI" id="CHEBI:2571"/>
        <dbReference type="ChEBI" id="CHEBI:7896"/>
        <dbReference type="ChEBI" id="CHEBI:15377"/>
        <dbReference type="ChEBI" id="CHEBI:15378"/>
        <dbReference type="ChEBI" id="CHEBI:25835"/>
    </reaction>
    <physiologicalReaction direction="left-to-right" evidence="1">
        <dbReference type="Rhea" id="RHEA:47393"/>
    </physiologicalReaction>
</comment>
<comment type="activity regulation">
    <text evidence="1">Acylglycerol lipase activity is activated upon binding to progesterone.</text>
</comment>
<comment type="subcellular location">
    <subcellularLocation>
        <location evidence="1">Cell membrane</location>
        <topology evidence="1">Single-pass type II membrane protein</topology>
    </subcellularLocation>
</comment>
<comment type="similarity">
    <text evidence="8">Belongs to the AB hydrolase superfamily. AB hydrolase 4 family.</text>
</comment>
<feature type="chain" id="PRO_0000280783" description="Monoacylglycerol lipase ABHD2">
    <location>
        <begin position="1"/>
        <end position="432"/>
    </location>
</feature>
<feature type="topological domain" description="Cytoplasmic" evidence="8">
    <location>
        <begin position="1"/>
        <end position="14"/>
    </location>
</feature>
<feature type="transmembrane region" description="Helical; Signal-anchor for type II membrane protein" evidence="4">
    <location>
        <begin position="15"/>
        <end position="35"/>
    </location>
</feature>
<feature type="topological domain" description="Extracellular" evidence="8">
    <location>
        <begin position="36"/>
        <end position="432"/>
    </location>
</feature>
<feature type="domain" description="AB hydrolase-1" evidence="4">
    <location>
        <begin position="132"/>
        <end position="383"/>
    </location>
</feature>
<feature type="region of interest" description="Disordered" evidence="6">
    <location>
        <begin position="413"/>
        <end position="432"/>
    </location>
</feature>
<feature type="compositionally biased region" description="Polar residues" evidence="6">
    <location>
        <begin position="418"/>
        <end position="432"/>
    </location>
</feature>
<feature type="active site" description="Nucleophile" evidence="2">
    <location>
        <position position="212"/>
    </location>
</feature>
<feature type="active site" description="Charge relay system" evidence="2">
    <location>
        <position position="346"/>
    </location>
</feature>
<feature type="active site" description="Charge relay system" evidence="2">
    <location>
        <position position="377"/>
    </location>
</feature>
<feature type="glycosylation site" description="N-linked (GlcNAc...) asparagine" evidence="5">
    <location>
        <position position="141"/>
    </location>
</feature>
<feature type="glycosylation site" description="N-linked (GlcNAc...) asparagine" evidence="5">
    <location>
        <position position="225"/>
    </location>
</feature>
<feature type="glycosylation site" description="N-linked (GlcNAc...) asparagine" evidence="5">
    <location>
        <position position="423"/>
    </location>
</feature>
<evidence type="ECO:0000250" key="1">
    <source>
        <dbReference type="UniProtKB" id="P08910"/>
    </source>
</evidence>
<evidence type="ECO:0000250" key="2">
    <source>
        <dbReference type="UniProtKB" id="Q86WA6"/>
    </source>
</evidence>
<evidence type="ECO:0000250" key="3">
    <source>
        <dbReference type="UniProtKB" id="Q9QXM0"/>
    </source>
</evidence>
<evidence type="ECO:0000255" key="4"/>
<evidence type="ECO:0000255" key="5">
    <source>
        <dbReference type="PROSITE-ProRule" id="PRU00498"/>
    </source>
</evidence>
<evidence type="ECO:0000256" key="6">
    <source>
        <dbReference type="SAM" id="MobiDB-lite"/>
    </source>
</evidence>
<evidence type="ECO:0000303" key="7">
    <source ref="1"/>
</evidence>
<evidence type="ECO:0000305" key="8"/>